<sequence>MKVTVLASAILALINGALALPANAPTLDVTLTQVDNTRIKATVKNIGNEEVTFVHLNFFQDAAPVKKVSLFRNATEVEFTGIKRRYLTEGLSDDALTTLAAGATFEDEFDIASTADLTEGGTVTIRTDGVVPMATDRKVSGYIPYQSNELEIEVDAAKAATVPQAIKLLDRRTKVASCSGSRASALSTALRNTVSLANAAASAASSGSSARFQEYFRTTSSSTRNAVAARFRAIANEASSQSSGKTTYYCTDPYGYCDSNTLAFCLPSSNVIANCDLYYSDLPALTRSCHAQDQATTSLHEFTHAPGVYSPGTDDFAYGYRASTALSASQALLNADNYALFANGTPPSFPSPHPLSSAQTNMV</sequence>
<accession>A1CVX6</accession>
<feature type="signal peptide" evidence="2">
    <location>
        <begin position="1"/>
        <end position="19"/>
    </location>
</feature>
<feature type="propeptide" id="PRO_0000407128" evidence="1">
    <location>
        <begin position="20"/>
        <end position="172"/>
    </location>
</feature>
<feature type="chain" id="PRO_0000407129" description="Neutral protease 2 homolog NFIA_102630">
    <location>
        <begin position="173"/>
        <end position="363"/>
    </location>
</feature>
<feature type="active site" evidence="3">
    <location>
        <position position="301"/>
    </location>
</feature>
<feature type="binding site" evidence="3">
    <location>
        <position position="300"/>
    </location>
    <ligand>
        <name>Zn(2+)</name>
        <dbReference type="ChEBI" id="CHEBI:29105"/>
        <note>catalytic</note>
    </ligand>
</feature>
<feature type="binding site" evidence="3">
    <location>
        <position position="304"/>
    </location>
    <ligand>
        <name>Zn(2+)</name>
        <dbReference type="ChEBI" id="CHEBI:29105"/>
        <note>catalytic</note>
    </ligand>
</feature>
<feature type="binding site" evidence="3">
    <location>
        <position position="315"/>
    </location>
    <ligand>
        <name>Zn(2+)</name>
        <dbReference type="ChEBI" id="CHEBI:29105"/>
        <note>catalytic</note>
    </ligand>
</feature>
<feature type="disulfide bond" evidence="1">
    <location>
        <begin position="178"/>
        <end position="250"/>
    </location>
</feature>
<feature type="disulfide bond" evidence="1">
    <location>
        <begin position="257"/>
        <end position="275"/>
    </location>
</feature>
<proteinExistence type="inferred from homology"/>
<gene>
    <name type="ORF">NFIA_102630</name>
</gene>
<reference key="1">
    <citation type="journal article" date="2008" name="PLoS Genet.">
        <title>Genomic islands in the pathogenic filamentous fungus Aspergillus fumigatus.</title>
        <authorList>
            <person name="Fedorova N.D."/>
            <person name="Khaldi N."/>
            <person name="Joardar V.S."/>
            <person name="Maiti R."/>
            <person name="Amedeo P."/>
            <person name="Anderson M.J."/>
            <person name="Crabtree J."/>
            <person name="Silva J.C."/>
            <person name="Badger J.H."/>
            <person name="Albarraq A."/>
            <person name="Angiuoli S."/>
            <person name="Bussey H."/>
            <person name="Bowyer P."/>
            <person name="Cotty P.J."/>
            <person name="Dyer P.S."/>
            <person name="Egan A."/>
            <person name="Galens K."/>
            <person name="Fraser-Liggett C.M."/>
            <person name="Haas B.J."/>
            <person name="Inman J.M."/>
            <person name="Kent R."/>
            <person name="Lemieux S."/>
            <person name="Malavazi I."/>
            <person name="Orvis J."/>
            <person name="Roemer T."/>
            <person name="Ronning C.M."/>
            <person name="Sundaram J.P."/>
            <person name="Sutton G."/>
            <person name="Turner G."/>
            <person name="Venter J.C."/>
            <person name="White O.R."/>
            <person name="Whitty B.R."/>
            <person name="Youngman P."/>
            <person name="Wolfe K.H."/>
            <person name="Goldman G.H."/>
            <person name="Wortman J.R."/>
            <person name="Jiang B."/>
            <person name="Denning D.W."/>
            <person name="Nierman W.C."/>
        </authorList>
    </citation>
    <scope>NUCLEOTIDE SEQUENCE [LARGE SCALE GENOMIC DNA]</scope>
    <source>
        <strain>ATCC 1020 / DSM 3700 / CBS 544.65 / FGSC A1164 / JCM 1740 / NRRL 181 / WB 181</strain>
    </source>
</reference>
<keyword id="KW-0165">Cleavage on pair of basic residues</keyword>
<keyword id="KW-1015">Disulfide bond</keyword>
<keyword id="KW-0378">Hydrolase</keyword>
<keyword id="KW-0479">Metal-binding</keyword>
<keyword id="KW-0482">Metalloprotease</keyword>
<keyword id="KW-0645">Protease</keyword>
<keyword id="KW-1185">Reference proteome</keyword>
<keyword id="KW-0964">Secreted</keyword>
<keyword id="KW-0732">Signal</keyword>
<keyword id="KW-0862">Zinc</keyword>
<keyword id="KW-0865">Zymogen</keyword>
<evidence type="ECO:0000250" key="1"/>
<evidence type="ECO:0000255" key="2"/>
<evidence type="ECO:0000255" key="3">
    <source>
        <dbReference type="PROSITE-ProRule" id="PRU10095"/>
    </source>
</evidence>
<evidence type="ECO:0000305" key="4"/>
<dbReference type="EC" id="3.4.24.39"/>
<dbReference type="EMBL" id="DS027685">
    <property type="protein sequence ID" value="EAW24778.1"/>
    <property type="molecule type" value="Genomic_DNA"/>
</dbReference>
<dbReference type="RefSeq" id="XP_001266675.1">
    <property type="nucleotide sequence ID" value="XM_001266674.1"/>
</dbReference>
<dbReference type="SMR" id="A1CVX6"/>
<dbReference type="STRING" id="331117.A1CVX6"/>
<dbReference type="MEROPS" id="M35.002"/>
<dbReference type="EnsemblFungi" id="EAW24778">
    <property type="protein sequence ID" value="EAW24778"/>
    <property type="gene ID" value="NFIA_102630"/>
</dbReference>
<dbReference type="GeneID" id="4593431"/>
<dbReference type="KEGG" id="nfi:NFIA_102630"/>
<dbReference type="VEuPathDB" id="FungiDB:NFIA_102630"/>
<dbReference type="eggNOG" id="ENOG502SGF5">
    <property type="taxonomic scope" value="Eukaryota"/>
</dbReference>
<dbReference type="HOGENOM" id="CLU_039313_1_1_1"/>
<dbReference type="OMA" id="ANCDLYY"/>
<dbReference type="OrthoDB" id="412874at2759"/>
<dbReference type="Proteomes" id="UP000006702">
    <property type="component" value="Unassembled WGS sequence"/>
</dbReference>
<dbReference type="GO" id="GO:0005576">
    <property type="term" value="C:extracellular region"/>
    <property type="evidence" value="ECO:0007669"/>
    <property type="project" value="UniProtKB-SubCell"/>
</dbReference>
<dbReference type="GO" id="GO:0046872">
    <property type="term" value="F:metal ion binding"/>
    <property type="evidence" value="ECO:0007669"/>
    <property type="project" value="UniProtKB-KW"/>
</dbReference>
<dbReference type="GO" id="GO:0004222">
    <property type="term" value="F:metalloendopeptidase activity"/>
    <property type="evidence" value="ECO:0007669"/>
    <property type="project" value="InterPro"/>
</dbReference>
<dbReference type="GO" id="GO:0006508">
    <property type="term" value="P:proteolysis"/>
    <property type="evidence" value="ECO:0007669"/>
    <property type="project" value="UniProtKB-KW"/>
</dbReference>
<dbReference type="CDD" id="cd11008">
    <property type="entry name" value="M35_deuterolysin_like"/>
    <property type="match status" value="1"/>
</dbReference>
<dbReference type="Gene3D" id="2.60.40.2970">
    <property type="match status" value="1"/>
</dbReference>
<dbReference type="Gene3D" id="3.40.390.10">
    <property type="entry name" value="Collagenase (Catalytic Domain)"/>
    <property type="match status" value="1"/>
</dbReference>
<dbReference type="InterPro" id="IPR050414">
    <property type="entry name" value="Fungal_M35_metalloproteases"/>
</dbReference>
<dbReference type="InterPro" id="IPR024079">
    <property type="entry name" value="MetalloPept_cat_dom_sf"/>
</dbReference>
<dbReference type="InterPro" id="IPR001384">
    <property type="entry name" value="Peptidase_M35"/>
</dbReference>
<dbReference type="PANTHER" id="PTHR37016">
    <property type="match status" value="1"/>
</dbReference>
<dbReference type="PANTHER" id="PTHR37016:SF3">
    <property type="entry name" value="NEUTRAL PROTEASE 2-RELATED"/>
    <property type="match status" value="1"/>
</dbReference>
<dbReference type="Pfam" id="PF02102">
    <property type="entry name" value="Peptidase_M35"/>
    <property type="match status" value="1"/>
</dbReference>
<dbReference type="PRINTS" id="PR00768">
    <property type="entry name" value="DEUTEROLYSIN"/>
</dbReference>
<dbReference type="SUPFAM" id="SSF55486">
    <property type="entry name" value="Metalloproteases ('zincins'), catalytic domain"/>
    <property type="match status" value="1"/>
</dbReference>
<dbReference type="PROSITE" id="PS00142">
    <property type="entry name" value="ZINC_PROTEASE"/>
    <property type="match status" value="1"/>
</dbReference>
<organism>
    <name type="scientific">Neosartorya fischeri (strain ATCC 1020 / DSM 3700 / CBS 544.65 / FGSC A1164 / JCM 1740 / NRRL 181 / WB 181)</name>
    <name type="common">Aspergillus fischerianus</name>
    <dbReference type="NCBI Taxonomy" id="331117"/>
    <lineage>
        <taxon>Eukaryota</taxon>
        <taxon>Fungi</taxon>
        <taxon>Dikarya</taxon>
        <taxon>Ascomycota</taxon>
        <taxon>Pezizomycotina</taxon>
        <taxon>Eurotiomycetes</taxon>
        <taxon>Eurotiomycetidae</taxon>
        <taxon>Eurotiales</taxon>
        <taxon>Aspergillaceae</taxon>
        <taxon>Aspergillus</taxon>
        <taxon>Aspergillus subgen. Fumigati</taxon>
    </lineage>
</organism>
<protein>
    <recommendedName>
        <fullName>Neutral protease 2 homolog NFIA_102630</fullName>
        <ecNumber>3.4.24.39</ecNumber>
    </recommendedName>
    <alternativeName>
        <fullName>Deuterolysin NFIA_102630</fullName>
    </alternativeName>
</protein>
<name>NPIIB_NEOFI</name>
<comment type="function">
    <text evidence="1">Secreted metalloproteinase that allows assimilation of proteinaceous substrates. Shows high activities on basic nuclear substrates such as histone and protamine (By similarity).</text>
</comment>
<comment type="catalytic activity">
    <reaction>
        <text>Preferential cleavage of bonds with hydrophobic residues in P1'. Also 3-Asn-|-Gln-4 and 8-Gly-|-Ser-9 bonds in insulin B chain.</text>
        <dbReference type="EC" id="3.4.24.39"/>
    </reaction>
</comment>
<comment type="cofactor">
    <cofactor evidence="1">
        <name>Zn(2+)</name>
        <dbReference type="ChEBI" id="CHEBI:29105"/>
    </cofactor>
    <text evidence="1">Binds 1 zinc ion per subunit.</text>
</comment>
<comment type="subcellular location">
    <subcellularLocation>
        <location evidence="1">Secreted</location>
    </subcellularLocation>
</comment>
<comment type="similarity">
    <text evidence="4">Belongs to the peptidase M35 family.</text>
</comment>